<sequence length="75" mass="8314">MSKSTFLFVYIILILGSMVNEIQGQHAMCHEILPETDCGAGSCTALCLQLWRGTGKCVRTNDQKLICLCNFECIV</sequence>
<accession>P82721</accession>
<proteinExistence type="inferred from homology"/>
<name>DF126_ARATH</name>
<keyword id="KW-0929">Antimicrobial</keyword>
<keyword id="KW-1015">Disulfide bond</keyword>
<keyword id="KW-0295">Fungicide</keyword>
<keyword id="KW-0611">Plant defense</keyword>
<keyword id="KW-1185">Reference proteome</keyword>
<keyword id="KW-0964">Secreted</keyword>
<keyword id="KW-0732">Signal</keyword>
<feature type="signal peptide" evidence="2">
    <location>
        <begin position="1"/>
        <end position="24"/>
    </location>
</feature>
<feature type="chain" id="PRO_0000017249" description="Putative defensin-like protein 126">
    <location>
        <begin position="25"/>
        <end position="75"/>
    </location>
</feature>
<feature type="disulfide bond" evidence="1">
    <location>
        <begin position="29"/>
        <end position="73"/>
    </location>
</feature>
<feature type="disulfide bond" evidence="1">
    <location>
        <begin position="38"/>
        <end position="57"/>
    </location>
</feature>
<feature type="disulfide bond" evidence="1">
    <location>
        <begin position="43"/>
        <end position="67"/>
    </location>
</feature>
<feature type="disulfide bond" evidence="1">
    <location>
        <begin position="47"/>
        <end position="69"/>
    </location>
</feature>
<gene>
    <name type="primary">LCR6</name>
    <name type="ordered locus">At5g47077</name>
    <name type="ORF">K14A3</name>
    <name type="ORF">MQD22</name>
</gene>
<protein>
    <recommendedName>
        <fullName>Putative defensin-like protein 126</fullName>
    </recommendedName>
    <alternativeName>
        <fullName>Putative low-molecular-weight cysteine-rich protein 6</fullName>
        <shortName>Protein LCR6</shortName>
    </alternativeName>
</protein>
<organism evidence="3">
    <name type="scientific">Arabidopsis thaliana</name>
    <name type="common">Mouse-ear cress</name>
    <dbReference type="NCBI Taxonomy" id="3702"/>
    <lineage>
        <taxon>Eukaryota</taxon>
        <taxon>Viridiplantae</taxon>
        <taxon>Streptophyta</taxon>
        <taxon>Embryophyta</taxon>
        <taxon>Tracheophyta</taxon>
        <taxon>Spermatophyta</taxon>
        <taxon>Magnoliopsida</taxon>
        <taxon>eudicotyledons</taxon>
        <taxon>Gunneridae</taxon>
        <taxon>Pentapetalae</taxon>
        <taxon>rosids</taxon>
        <taxon>malvids</taxon>
        <taxon>Brassicales</taxon>
        <taxon>Brassicaceae</taxon>
        <taxon>Camelineae</taxon>
        <taxon>Arabidopsis</taxon>
    </lineage>
</organism>
<reference key="1">
    <citation type="journal article" date="1998" name="DNA Res.">
        <title>Structural analysis of Arabidopsis thaliana chromosome 5. VI. Sequence features of the regions of 1,367,185 bp covered by 19 physically assigned P1 and TAC clones.</title>
        <authorList>
            <person name="Kotani H."/>
            <person name="Nakamura Y."/>
            <person name="Sato S."/>
            <person name="Asamizu E."/>
            <person name="Kaneko T."/>
            <person name="Miyajima N."/>
            <person name="Tabata S."/>
        </authorList>
    </citation>
    <scope>NUCLEOTIDE SEQUENCE [LARGE SCALE GENOMIC DNA]</scope>
    <source>
        <strain>cv. Columbia</strain>
    </source>
</reference>
<reference key="2">
    <citation type="submission" date="1999-04" db="EMBL/GenBank/DDBJ databases">
        <title>Structural analysis of Arabidopsis thaliana chromosome 5. XI.</title>
        <authorList>
            <person name="Kaneko T."/>
            <person name="Katoh T."/>
            <person name="Asamizu E."/>
            <person name="Sato S."/>
            <person name="Nakamura Y."/>
            <person name="Kotani H."/>
            <person name="Tabata S."/>
        </authorList>
    </citation>
    <scope>NUCLEOTIDE SEQUENCE [LARGE SCALE GENOMIC DNA]</scope>
    <source>
        <strain>cv. Columbia</strain>
    </source>
</reference>
<reference key="3">
    <citation type="journal article" date="2017" name="Plant J.">
        <title>Araport11: a complete reannotation of the Arabidopsis thaliana reference genome.</title>
        <authorList>
            <person name="Cheng C.Y."/>
            <person name="Krishnakumar V."/>
            <person name="Chan A.P."/>
            <person name="Thibaud-Nissen F."/>
            <person name="Schobel S."/>
            <person name="Town C.D."/>
        </authorList>
    </citation>
    <scope>GENOME REANNOTATION</scope>
    <source>
        <strain>cv. Columbia</strain>
    </source>
</reference>
<reference evidence="3" key="4">
    <citation type="journal article" date="2001" name="Plant Mol. Biol.">
        <title>Two large Arabidopsis thaliana gene families are homologous to the Brassica gene superfamily that encodes pollen coat proteins and the male component of the self-incompatibility response.</title>
        <authorList>
            <person name="Vanoosthuyse V."/>
            <person name="Miege C."/>
            <person name="Dumas C."/>
            <person name="Cock J.M."/>
        </authorList>
    </citation>
    <scope>IDENTIFICATION</scope>
</reference>
<reference key="5">
    <citation type="journal article" date="2005" name="Plant Physiol.">
        <title>Genome organization of more than 300 defensin-like genes in Arabidopsis.</title>
        <authorList>
            <person name="Silverstein K.A.T."/>
            <person name="Graham M.A."/>
            <person name="Paape T.D."/>
            <person name="VandenBosch K.A."/>
        </authorList>
    </citation>
    <scope>GENE FAMILY</scope>
</reference>
<evidence type="ECO:0000250" key="1"/>
<evidence type="ECO:0000255" key="2"/>
<evidence type="ECO:0000305" key="3"/>
<comment type="subcellular location">
    <subcellularLocation>
        <location evidence="1">Secreted</location>
    </subcellularLocation>
</comment>
<comment type="similarity">
    <text evidence="3">Belongs to the DEFL family.</text>
</comment>
<dbReference type="EMBL" id="AB013394">
    <property type="status" value="NOT_ANNOTATED_CDS"/>
    <property type="molecule type" value="Genomic_DNA"/>
</dbReference>
<dbReference type="EMBL" id="AB025609">
    <property type="status" value="NOT_ANNOTATED_CDS"/>
    <property type="molecule type" value="Genomic_DNA"/>
</dbReference>
<dbReference type="EMBL" id="CP002688">
    <property type="protein sequence ID" value="AED95465.1"/>
    <property type="molecule type" value="Genomic_DNA"/>
</dbReference>
<dbReference type="RefSeq" id="NP_001032025.1">
    <property type="nucleotide sequence ID" value="NM_001036948.1"/>
</dbReference>
<dbReference type="SMR" id="P82721"/>
<dbReference type="STRING" id="3702.P82721"/>
<dbReference type="PaxDb" id="3702-AT5G47077.1"/>
<dbReference type="EnsemblPlants" id="AT5G47077.1">
    <property type="protein sequence ID" value="AT5G47077.1"/>
    <property type="gene ID" value="AT5G47077"/>
</dbReference>
<dbReference type="GeneID" id="3771458"/>
<dbReference type="Gramene" id="AT5G47077.1">
    <property type="protein sequence ID" value="AT5G47077.1"/>
    <property type="gene ID" value="AT5G47077"/>
</dbReference>
<dbReference type="KEGG" id="ath:AT5G47077"/>
<dbReference type="Araport" id="AT5G47077"/>
<dbReference type="TAIR" id="AT5G47077">
    <property type="gene designation" value="LCR6"/>
</dbReference>
<dbReference type="HOGENOM" id="CLU_182511_2_1_1"/>
<dbReference type="InParanoid" id="P82721"/>
<dbReference type="OMA" id="CHEILPE"/>
<dbReference type="PhylomeDB" id="P82721"/>
<dbReference type="PRO" id="PR:P82721"/>
<dbReference type="Proteomes" id="UP000006548">
    <property type="component" value="Chromosome 5"/>
</dbReference>
<dbReference type="ExpressionAtlas" id="P82721">
    <property type="expression patterns" value="baseline"/>
</dbReference>
<dbReference type="GO" id="GO:0005576">
    <property type="term" value="C:extracellular region"/>
    <property type="evidence" value="ECO:0007669"/>
    <property type="project" value="UniProtKB-SubCell"/>
</dbReference>
<dbReference type="GO" id="GO:0050832">
    <property type="term" value="P:defense response to fungus"/>
    <property type="evidence" value="ECO:0007669"/>
    <property type="project" value="UniProtKB-KW"/>
</dbReference>
<dbReference type="GO" id="GO:0031640">
    <property type="term" value="P:killing of cells of another organism"/>
    <property type="evidence" value="ECO:0007669"/>
    <property type="project" value="UniProtKB-KW"/>
</dbReference>
<dbReference type="InterPro" id="IPR010851">
    <property type="entry name" value="DEFL"/>
</dbReference>
<dbReference type="PANTHER" id="PTHR33830:SF3">
    <property type="entry name" value="DEFENSIN-LIKE PROTEIN 127-RELATED"/>
    <property type="match status" value="1"/>
</dbReference>
<dbReference type="PANTHER" id="PTHR33830">
    <property type="entry name" value="DEFENSIN-LIKE PROTEIN 184-RELATED"/>
    <property type="match status" value="1"/>
</dbReference>
<dbReference type="Pfam" id="PF07333">
    <property type="entry name" value="SLR1-BP"/>
    <property type="match status" value="1"/>
</dbReference>